<protein>
    <recommendedName>
        <fullName evidence="1">3'-5' exoribonuclease YhaM</fullName>
        <ecNumber evidence="1">3.1.-.-</ecNumber>
    </recommendedName>
</protein>
<comment type="function">
    <text evidence="1">Shows a 3'-5' exoribonuclease activity.</text>
</comment>
<comment type="similarity">
    <text evidence="1">Belongs to the YhaM family.</text>
</comment>
<evidence type="ECO:0000255" key="1">
    <source>
        <dbReference type="HAMAP-Rule" id="MF_01427"/>
    </source>
</evidence>
<evidence type="ECO:0000255" key="2">
    <source>
        <dbReference type="PROSITE-ProRule" id="PRU01175"/>
    </source>
</evidence>
<feature type="chain" id="PRO_0000109859" description="3'-5' exoribonuclease YhaM">
    <location>
        <begin position="1"/>
        <end position="314"/>
    </location>
</feature>
<feature type="domain" description="HD" evidence="2">
    <location>
        <begin position="163"/>
        <end position="279"/>
    </location>
</feature>
<feature type="DNA-binding region" description="OB">
    <location>
        <begin position="14"/>
        <end position="90"/>
    </location>
</feature>
<gene>
    <name evidence="1" type="primary">yhaM</name>
    <name type="ordered locus">BLi01070</name>
    <name type="ordered locus">BL02861</name>
</gene>
<name>YHAM_BACLD</name>
<organism>
    <name type="scientific">Bacillus licheniformis (strain ATCC 14580 / DSM 13 / JCM 2505 / CCUG 7422 / NBRC 12200 / NCIMB 9375 / NCTC 10341 / NRRL NRS-1264 / Gibson 46)</name>
    <dbReference type="NCBI Taxonomy" id="279010"/>
    <lineage>
        <taxon>Bacteria</taxon>
        <taxon>Bacillati</taxon>
        <taxon>Bacillota</taxon>
        <taxon>Bacilli</taxon>
        <taxon>Bacillales</taxon>
        <taxon>Bacillaceae</taxon>
        <taxon>Bacillus</taxon>
    </lineage>
</organism>
<keyword id="KW-0238">DNA-binding</keyword>
<keyword id="KW-0269">Exonuclease</keyword>
<keyword id="KW-0378">Hydrolase</keyword>
<keyword id="KW-0540">Nuclease</keyword>
<keyword id="KW-1185">Reference proteome</keyword>
<proteinExistence type="inferred from homology"/>
<reference key="1">
    <citation type="journal article" date="2004" name="J. Mol. Microbiol. Biotechnol.">
        <title>The complete genome sequence of Bacillus licheniformis DSM13, an organism with great industrial potential.</title>
        <authorList>
            <person name="Veith B."/>
            <person name="Herzberg C."/>
            <person name="Steckel S."/>
            <person name="Feesche J."/>
            <person name="Maurer K.H."/>
            <person name="Ehrenreich P."/>
            <person name="Baeumer S."/>
            <person name="Henne A."/>
            <person name="Liesegang H."/>
            <person name="Merkl R."/>
            <person name="Ehrenreich A."/>
            <person name="Gottschalk G."/>
        </authorList>
    </citation>
    <scope>NUCLEOTIDE SEQUENCE [LARGE SCALE GENOMIC DNA]</scope>
    <source>
        <strain>ATCC 14580 / DSM 13 / JCM 2505 / CCUG 7422 / NBRC 12200 / NCIMB 9375 / NCTC 10341 / NRRL NRS-1264 / Gibson 46</strain>
    </source>
</reference>
<reference key="2">
    <citation type="journal article" date="2004" name="Genome Biol.">
        <title>Complete genome sequence of the industrial bacterium Bacillus licheniformis and comparisons with closely related Bacillus species.</title>
        <authorList>
            <person name="Rey M.W."/>
            <person name="Ramaiya P."/>
            <person name="Nelson B.A."/>
            <person name="Brody-Karpin S.D."/>
            <person name="Zaretsky E.J."/>
            <person name="Tang M."/>
            <person name="Lopez de Leon A."/>
            <person name="Xiang H."/>
            <person name="Gusti V."/>
            <person name="Clausen I.G."/>
            <person name="Olsen P.B."/>
            <person name="Rasmussen M.D."/>
            <person name="Andersen J.T."/>
            <person name="Joergensen P.L."/>
            <person name="Larsen T.S."/>
            <person name="Sorokin A."/>
            <person name="Bolotin A."/>
            <person name="Lapidus A."/>
            <person name="Galleron N."/>
            <person name="Ehrlich S.D."/>
            <person name="Berka R.M."/>
        </authorList>
    </citation>
    <scope>NUCLEOTIDE SEQUENCE [LARGE SCALE GENOMIC DNA]</scope>
    <source>
        <strain>ATCC 14580 / DSM 13 / JCM 2505 / CCUG 7422 / NBRC 12200 / NCIMB 9375 / NCTC 10341 / NRRL NRS-1264 / Gibson 46</strain>
    </source>
</reference>
<reference key="3">
    <citation type="submission" date="2007-04" db="EMBL/GenBank/DDBJ databases">
        <authorList>
            <person name="Berka R.M."/>
            <person name="Rey M.W."/>
            <person name="Ramaiya P."/>
        </authorList>
    </citation>
    <scope>SEQUENCE REVISION TO 311-314</scope>
</reference>
<sequence length="314" mass="35595">MAKGIMLHEVGEQVDLYLLIKSSTKGIASNGKPFLTLMLQDQSGDIEAKLWDAKQQDEVTYGPQTIVKVVGDIHHYRGRNQLKLRNIRPAGENENVKIDDFLETAPIPKNEMMDAVTQYIFEMKNPNIQRITRHLVKKYGKEFIDYPAATKNHHEFVSGLAYHVVSMLNLAKSVADLYPSLDRDLLYAGVILHDLGKVKELSGPVSTTYTVEGNLLGHISIMVTEIAKAAEELQIDSEEVLILQHLILSHHGKPEWGSPKPPMVKEAEILHYIDNLDAKINMMDRALERVKPGEYTERVFALDNRSFYKPVFHK</sequence>
<accession>Q65LT6</accession>
<accession>Q62X75</accession>
<dbReference type="EC" id="3.1.-.-" evidence="1"/>
<dbReference type="EMBL" id="AE017333">
    <property type="protein sequence ID" value="AAU39978.1"/>
    <property type="molecule type" value="Genomic_DNA"/>
</dbReference>
<dbReference type="EMBL" id="CP000002">
    <property type="protein sequence ID" value="AAU22633.2"/>
    <property type="molecule type" value="Genomic_DNA"/>
</dbReference>
<dbReference type="RefSeq" id="WP_003180239.1">
    <property type="nucleotide sequence ID" value="NC_006322.1"/>
</dbReference>
<dbReference type="STRING" id="279010.BL02861"/>
<dbReference type="GeneID" id="92862352"/>
<dbReference type="KEGG" id="bld:BLi01070"/>
<dbReference type="KEGG" id="bli:BL02861"/>
<dbReference type="eggNOG" id="COG3481">
    <property type="taxonomic scope" value="Bacteria"/>
</dbReference>
<dbReference type="HOGENOM" id="CLU_056349_2_0_9"/>
<dbReference type="Proteomes" id="UP000000606">
    <property type="component" value="Chromosome"/>
</dbReference>
<dbReference type="GO" id="GO:0000175">
    <property type="term" value="F:3'-5'-RNA exonuclease activity"/>
    <property type="evidence" value="ECO:0007669"/>
    <property type="project" value="UniProtKB-UniRule"/>
</dbReference>
<dbReference type="GO" id="GO:0003677">
    <property type="term" value="F:DNA binding"/>
    <property type="evidence" value="ECO:0007669"/>
    <property type="project" value="UniProtKB-KW"/>
</dbReference>
<dbReference type="GO" id="GO:0031125">
    <property type="term" value="P:rRNA 3'-end processing"/>
    <property type="evidence" value="ECO:0007669"/>
    <property type="project" value="TreeGrafter"/>
</dbReference>
<dbReference type="CDD" id="cd00077">
    <property type="entry name" value="HDc"/>
    <property type="match status" value="1"/>
</dbReference>
<dbReference type="CDD" id="cd04492">
    <property type="entry name" value="YhaM_OBF_like"/>
    <property type="match status" value="1"/>
</dbReference>
<dbReference type="FunFam" id="1.10.3210.10:FF:000008">
    <property type="entry name" value="3'-5' exoribonuclease YhaM"/>
    <property type="match status" value="1"/>
</dbReference>
<dbReference type="Gene3D" id="1.10.3210.10">
    <property type="entry name" value="Hypothetical protein af1432"/>
    <property type="match status" value="1"/>
</dbReference>
<dbReference type="Gene3D" id="2.40.50.140">
    <property type="entry name" value="Nucleic acid-binding proteins"/>
    <property type="match status" value="1"/>
</dbReference>
<dbReference type="HAMAP" id="MF_01427">
    <property type="entry name" value="3_5_Exoribonuc_YhaM"/>
    <property type="match status" value="1"/>
</dbReference>
<dbReference type="InterPro" id="IPR020873">
    <property type="entry name" value="3'-5'_exoribonuclease_YhaM"/>
</dbReference>
<dbReference type="InterPro" id="IPR003607">
    <property type="entry name" value="HD/PDEase_dom"/>
</dbReference>
<dbReference type="InterPro" id="IPR006674">
    <property type="entry name" value="HD_domain"/>
</dbReference>
<dbReference type="InterPro" id="IPR012340">
    <property type="entry name" value="NA-bd_OB-fold"/>
</dbReference>
<dbReference type="InterPro" id="IPR050798">
    <property type="entry name" value="YhaM_exoribonuc/phosphodiest"/>
</dbReference>
<dbReference type="NCBIfam" id="NF010007">
    <property type="entry name" value="PRK13480.1"/>
    <property type="match status" value="1"/>
</dbReference>
<dbReference type="PANTHER" id="PTHR37294">
    <property type="entry name" value="3'-5' EXORIBONUCLEASE YHAM"/>
    <property type="match status" value="1"/>
</dbReference>
<dbReference type="PANTHER" id="PTHR37294:SF1">
    <property type="entry name" value="3'-5' EXORIBONUCLEASE YHAM"/>
    <property type="match status" value="1"/>
</dbReference>
<dbReference type="Pfam" id="PF01966">
    <property type="entry name" value="HD"/>
    <property type="match status" value="1"/>
</dbReference>
<dbReference type="SMART" id="SM00471">
    <property type="entry name" value="HDc"/>
    <property type="match status" value="1"/>
</dbReference>
<dbReference type="SUPFAM" id="SSF109604">
    <property type="entry name" value="HD-domain/PDEase-like"/>
    <property type="match status" value="1"/>
</dbReference>
<dbReference type="PROSITE" id="PS51831">
    <property type="entry name" value="HD"/>
    <property type="match status" value="1"/>
</dbReference>